<gene>
    <name evidence="1" type="primary">recO</name>
    <name type="ordered locus">SSON_2689</name>
</gene>
<sequence>MEGWQRAFVLHSRPWSETSLMLDVFTEESGRVRLVAKGARSKRSTLKGALQPFTPLLLRFGGRGEVKTLRSAEAVSLALPLSGITLYSGLYINELLSRVLEYETRFSELFFDYLHCIQSLAGATGTPEPALRRFELALLGHLGYGVNFTHCAGSGEPVDDTMTYRYREEKGFIASVVIDNKTFTGRQLKALNAREFPDADTLRAAKRFTRMALKPYLGGKPLKSRELFRQFMPKRTVKTHYE</sequence>
<accession>Q3YYV1</accession>
<feature type="chain" id="PRO_0000227055" description="DNA repair protein RecO">
    <location>
        <begin position="1"/>
        <end position="242"/>
    </location>
</feature>
<name>RECO_SHISS</name>
<reference key="1">
    <citation type="journal article" date="2005" name="Nucleic Acids Res.">
        <title>Genome dynamics and diversity of Shigella species, the etiologic agents of bacillary dysentery.</title>
        <authorList>
            <person name="Yang F."/>
            <person name="Yang J."/>
            <person name="Zhang X."/>
            <person name="Chen L."/>
            <person name="Jiang Y."/>
            <person name="Yan Y."/>
            <person name="Tang X."/>
            <person name="Wang J."/>
            <person name="Xiong Z."/>
            <person name="Dong J."/>
            <person name="Xue Y."/>
            <person name="Zhu Y."/>
            <person name="Xu X."/>
            <person name="Sun L."/>
            <person name="Chen S."/>
            <person name="Nie H."/>
            <person name="Peng J."/>
            <person name="Xu J."/>
            <person name="Wang Y."/>
            <person name="Yuan Z."/>
            <person name="Wen Y."/>
            <person name="Yao Z."/>
            <person name="Shen Y."/>
            <person name="Qiang B."/>
            <person name="Hou Y."/>
            <person name="Yu J."/>
            <person name="Jin Q."/>
        </authorList>
    </citation>
    <scope>NUCLEOTIDE SEQUENCE [LARGE SCALE GENOMIC DNA]</scope>
    <source>
        <strain>Ss046</strain>
    </source>
</reference>
<protein>
    <recommendedName>
        <fullName evidence="1">DNA repair protein RecO</fullName>
    </recommendedName>
    <alternativeName>
        <fullName evidence="1">Recombination protein O</fullName>
    </alternativeName>
</protein>
<comment type="function">
    <text evidence="1">Involved in DNA repair and RecF pathway recombination.</text>
</comment>
<comment type="subunit">
    <text evidence="1">Monomer.</text>
</comment>
<comment type="similarity">
    <text evidence="1">Belongs to the RecO family.</text>
</comment>
<organism>
    <name type="scientific">Shigella sonnei (strain Ss046)</name>
    <dbReference type="NCBI Taxonomy" id="300269"/>
    <lineage>
        <taxon>Bacteria</taxon>
        <taxon>Pseudomonadati</taxon>
        <taxon>Pseudomonadota</taxon>
        <taxon>Gammaproteobacteria</taxon>
        <taxon>Enterobacterales</taxon>
        <taxon>Enterobacteriaceae</taxon>
        <taxon>Shigella</taxon>
    </lineage>
</organism>
<evidence type="ECO:0000255" key="1">
    <source>
        <dbReference type="HAMAP-Rule" id="MF_00201"/>
    </source>
</evidence>
<proteinExistence type="inferred from homology"/>
<dbReference type="EMBL" id="CP000038">
    <property type="protein sequence ID" value="AAZ89311.1"/>
    <property type="molecule type" value="Genomic_DNA"/>
</dbReference>
<dbReference type="RefSeq" id="WP_000399393.1">
    <property type="nucleotide sequence ID" value="NC_007384.1"/>
</dbReference>
<dbReference type="SMR" id="Q3YYV1"/>
<dbReference type="GeneID" id="93774526"/>
<dbReference type="KEGG" id="ssn:SSON_2689"/>
<dbReference type="HOGENOM" id="CLU_066645_1_0_6"/>
<dbReference type="Proteomes" id="UP000002529">
    <property type="component" value="Chromosome"/>
</dbReference>
<dbReference type="GO" id="GO:0043590">
    <property type="term" value="C:bacterial nucleoid"/>
    <property type="evidence" value="ECO:0007669"/>
    <property type="project" value="TreeGrafter"/>
</dbReference>
<dbReference type="GO" id="GO:0006310">
    <property type="term" value="P:DNA recombination"/>
    <property type="evidence" value="ECO:0007669"/>
    <property type="project" value="UniProtKB-UniRule"/>
</dbReference>
<dbReference type="GO" id="GO:0006302">
    <property type="term" value="P:double-strand break repair"/>
    <property type="evidence" value="ECO:0007669"/>
    <property type="project" value="TreeGrafter"/>
</dbReference>
<dbReference type="FunFam" id="1.20.1440.120:FF:000001">
    <property type="entry name" value="DNA repair protein RecO"/>
    <property type="match status" value="1"/>
</dbReference>
<dbReference type="FunFam" id="2.40.50.140:FF:000074">
    <property type="entry name" value="DNA repair protein RecO"/>
    <property type="match status" value="1"/>
</dbReference>
<dbReference type="Gene3D" id="2.40.50.140">
    <property type="entry name" value="Nucleic acid-binding proteins"/>
    <property type="match status" value="1"/>
</dbReference>
<dbReference type="Gene3D" id="1.20.1440.120">
    <property type="entry name" value="Recombination protein O, C-terminal domain"/>
    <property type="match status" value="1"/>
</dbReference>
<dbReference type="HAMAP" id="MF_00201">
    <property type="entry name" value="RecO"/>
    <property type="match status" value="1"/>
</dbReference>
<dbReference type="InterPro" id="IPR037278">
    <property type="entry name" value="ARFGAP/RecO"/>
</dbReference>
<dbReference type="InterPro" id="IPR022572">
    <property type="entry name" value="DNA_rep/recomb_RecO_N"/>
</dbReference>
<dbReference type="InterPro" id="IPR012340">
    <property type="entry name" value="NA-bd_OB-fold"/>
</dbReference>
<dbReference type="InterPro" id="IPR003717">
    <property type="entry name" value="RecO"/>
</dbReference>
<dbReference type="InterPro" id="IPR042242">
    <property type="entry name" value="RecO_C"/>
</dbReference>
<dbReference type="NCBIfam" id="TIGR00613">
    <property type="entry name" value="reco"/>
    <property type="match status" value="1"/>
</dbReference>
<dbReference type="PANTHER" id="PTHR33991">
    <property type="entry name" value="DNA REPAIR PROTEIN RECO"/>
    <property type="match status" value="1"/>
</dbReference>
<dbReference type="PANTHER" id="PTHR33991:SF1">
    <property type="entry name" value="DNA REPAIR PROTEIN RECO"/>
    <property type="match status" value="1"/>
</dbReference>
<dbReference type="Pfam" id="PF02565">
    <property type="entry name" value="RecO_C"/>
    <property type="match status" value="1"/>
</dbReference>
<dbReference type="Pfam" id="PF11967">
    <property type="entry name" value="RecO_N"/>
    <property type="match status" value="1"/>
</dbReference>
<dbReference type="SUPFAM" id="SSF57863">
    <property type="entry name" value="ArfGap/RecO-like zinc finger"/>
    <property type="match status" value="1"/>
</dbReference>
<dbReference type="SUPFAM" id="SSF50249">
    <property type="entry name" value="Nucleic acid-binding proteins"/>
    <property type="match status" value="1"/>
</dbReference>
<keyword id="KW-0227">DNA damage</keyword>
<keyword id="KW-0233">DNA recombination</keyword>
<keyword id="KW-0234">DNA repair</keyword>
<keyword id="KW-1185">Reference proteome</keyword>